<gene>
    <name type="primary">FMO1</name>
    <name type="synonym">FMO-1</name>
</gene>
<dbReference type="EC" id="1.14.13.148" evidence="1"/>
<dbReference type="EC" id="1.14.13.8" evidence="7"/>
<dbReference type="EMBL" id="M32031">
    <property type="protein sequence ID" value="AAA31033.1"/>
    <property type="molecule type" value="mRNA"/>
</dbReference>
<dbReference type="PIR" id="A33768">
    <property type="entry name" value="A33768"/>
</dbReference>
<dbReference type="RefSeq" id="NP_999229.1">
    <property type="nucleotide sequence ID" value="NM_214064.1"/>
</dbReference>
<dbReference type="RefSeq" id="XP_005656702.1">
    <property type="nucleotide sequence ID" value="XM_005656645.3"/>
</dbReference>
<dbReference type="SMR" id="P16549"/>
<dbReference type="FunCoup" id="P16549">
    <property type="interactions" value="49"/>
</dbReference>
<dbReference type="STRING" id="9823.ENSSSCP00000051826"/>
<dbReference type="GlyCosmos" id="P16549">
    <property type="glycosylation" value="1 site, No reported glycans"/>
</dbReference>
<dbReference type="GlyGen" id="P16549">
    <property type="glycosylation" value="1 site"/>
</dbReference>
<dbReference type="iPTMnet" id="P16549"/>
<dbReference type="PaxDb" id="9823-ENSSSCP00000016191"/>
<dbReference type="PeptideAtlas" id="P16549"/>
<dbReference type="Ensembl" id="ENSSSCT00035075473.1">
    <property type="protein sequence ID" value="ENSSSCP00035030726.1"/>
    <property type="gene ID" value="ENSSSCG00035056479.1"/>
</dbReference>
<dbReference type="Ensembl" id="ENSSSCT00045057157.1">
    <property type="protein sequence ID" value="ENSSSCP00045039947.1"/>
    <property type="gene ID" value="ENSSSCG00045033391.1"/>
</dbReference>
<dbReference type="Ensembl" id="ENSSSCT00050083786.1">
    <property type="protein sequence ID" value="ENSSSCP00050035963.1"/>
    <property type="gene ID" value="ENSSSCG00050061478.1"/>
</dbReference>
<dbReference type="Ensembl" id="ENSSSCT00055024748.1">
    <property type="protein sequence ID" value="ENSSSCP00055019643.1"/>
    <property type="gene ID" value="ENSSSCG00055012560.1"/>
</dbReference>
<dbReference type="Ensembl" id="ENSSSCT00065045563.1">
    <property type="protein sequence ID" value="ENSSSCP00065019538.1"/>
    <property type="gene ID" value="ENSSSCG00065033525.1"/>
</dbReference>
<dbReference type="Ensembl" id="ENSSSCT00065045579.1">
    <property type="protein sequence ID" value="ENSSSCP00065019546.1"/>
    <property type="gene ID" value="ENSSSCG00065033525.1"/>
</dbReference>
<dbReference type="Ensembl" id="ENSSSCT00065045588.1">
    <property type="protein sequence ID" value="ENSSSCP00065019551.1"/>
    <property type="gene ID" value="ENSSSCG00065033525.1"/>
</dbReference>
<dbReference type="Ensembl" id="ENSSSCT00070043455.1">
    <property type="protein sequence ID" value="ENSSSCP00070036573.1"/>
    <property type="gene ID" value="ENSSSCG00070021841.1"/>
</dbReference>
<dbReference type="Ensembl" id="ENSSSCT00070043463.1">
    <property type="protein sequence ID" value="ENSSSCP00070036581.1"/>
    <property type="gene ID" value="ENSSSCG00070021841.1"/>
</dbReference>
<dbReference type="Ensembl" id="ENSSSCT00070043480.1">
    <property type="protein sequence ID" value="ENSSSCP00070036597.1"/>
    <property type="gene ID" value="ENSSSCG00070021841.1"/>
</dbReference>
<dbReference type="Ensembl" id="ENSSSCT00115035550">
    <property type="protein sequence ID" value="ENSSSCP00115033706"/>
    <property type="gene ID" value="ENSSSCG00115020074"/>
</dbReference>
<dbReference type="GeneID" id="397132"/>
<dbReference type="KEGG" id="ssc:397132"/>
<dbReference type="CTD" id="2326"/>
<dbReference type="eggNOG" id="KOG1399">
    <property type="taxonomic scope" value="Eukaryota"/>
</dbReference>
<dbReference type="HOGENOM" id="CLU_006909_8_2_1"/>
<dbReference type="InParanoid" id="P16549"/>
<dbReference type="OMA" id="VMIKEVN"/>
<dbReference type="OrthoDB" id="66881at2759"/>
<dbReference type="TreeFam" id="TF105285"/>
<dbReference type="Reactome" id="R-SSC-1614558">
    <property type="pathway name" value="Degradation of cysteine and homocysteine"/>
</dbReference>
<dbReference type="Reactome" id="R-SSC-217271">
    <property type="pathway name" value="FMO oxidises nucleophiles"/>
</dbReference>
<dbReference type="SABIO-RK" id="P16549"/>
<dbReference type="Proteomes" id="UP000008227">
    <property type="component" value="Unplaced"/>
</dbReference>
<dbReference type="Proteomes" id="UP000314985">
    <property type="component" value="Chromosome 9"/>
</dbReference>
<dbReference type="Proteomes" id="UP000694570">
    <property type="component" value="Unplaced"/>
</dbReference>
<dbReference type="Proteomes" id="UP000694571">
    <property type="component" value="Unplaced"/>
</dbReference>
<dbReference type="Proteomes" id="UP000694720">
    <property type="component" value="Unplaced"/>
</dbReference>
<dbReference type="Proteomes" id="UP000694722">
    <property type="component" value="Unplaced"/>
</dbReference>
<dbReference type="Proteomes" id="UP000694723">
    <property type="component" value="Unplaced"/>
</dbReference>
<dbReference type="Proteomes" id="UP000694724">
    <property type="component" value="Unplaced"/>
</dbReference>
<dbReference type="Proteomes" id="UP000694725">
    <property type="component" value="Unplaced"/>
</dbReference>
<dbReference type="Proteomes" id="UP000694726">
    <property type="component" value="Unplaced"/>
</dbReference>
<dbReference type="Proteomes" id="UP000694727">
    <property type="component" value="Unplaced"/>
</dbReference>
<dbReference type="Proteomes" id="UP000694728">
    <property type="component" value="Unplaced"/>
</dbReference>
<dbReference type="Bgee" id="ENSSSCG00000015268">
    <property type="expression patterns" value="Expressed in lung and 43 other cell types or tissues"/>
</dbReference>
<dbReference type="ExpressionAtlas" id="P16549">
    <property type="expression patterns" value="baseline and differential"/>
</dbReference>
<dbReference type="GO" id="GO:0005789">
    <property type="term" value="C:endoplasmic reticulum membrane"/>
    <property type="evidence" value="ECO:0000314"/>
    <property type="project" value="UniProtKB"/>
</dbReference>
<dbReference type="GO" id="GO:0050660">
    <property type="term" value="F:flavin adenine dinucleotide binding"/>
    <property type="evidence" value="ECO:0007669"/>
    <property type="project" value="InterPro"/>
</dbReference>
<dbReference type="GO" id="GO:0047822">
    <property type="term" value="F:hypotaurine monooxygenase activity"/>
    <property type="evidence" value="ECO:0000250"/>
    <property type="project" value="UniProtKB"/>
</dbReference>
<dbReference type="GO" id="GO:0004499">
    <property type="term" value="F:N,N-dimethylaniline monooxygenase activity"/>
    <property type="evidence" value="ECO:0000314"/>
    <property type="project" value="UniProtKB"/>
</dbReference>
<dbReference type="GO" id="GO:0050661">
    <property type="term" value="F:NADP binding"/>
    <property type="evidence" value="ECO:0007669"/>
    <property type="project" value="InterPro"/>
</dbReference>
<dbReference type="GO" id="GO:0034899">
    <property type="term" value="F:trimethylamine monooxygenase activity"/>
    <property type="evidence" value="ECO:0000250"/>
    <property type="project" value="UniProtKB"/>
</dbReference>
<dbReference type="GO" id="GO:0006082">
    <property type="term" value="P:organic acid metabolic process"/>
    <property type="evidence" value="ECO:0000314"/>
    <property type="project" value="BHF-UCL"/>
</dbReference>
<dbReference type="GO" id="GO:0042412">
    <property type="term" value="P:taurine biosynthetic process"/>
    <property type="evidence" value="ECO:0000250"/>
    <property type="project" value="UniProtKB"/>
</dbReference>
<dbReference type="GO" id="GO:0009404">
    <property type="term" value="P:toxin metabolic process"/>
    <property type="evidence" value="ECO:0000314"/>
    <property type="project" value="BHF-UCL"/>
</dbReference>
<dbReference type="FunFam" id="3.50.50.60:FF:000159">
    <property type="entry name" value="Dimethylaniline monooxygenase [N-oxide-forming]"/>
    <property type="match status" value="1"/>
</dbReference>
<dbReference type="Gene3D" id="3.50.50.60">
    <property type="entry name" value="FAD/NAD(P)-binding domain"/>
    <property type="match status" value="4"/>
</dbReference>
<dbReference type="InterPro" id="IPR036188">
    <property type="entry name" value="FAD/NAD-bd_sf"/>
</dbReference>
<dbReference type="InterPro" id="IPR000960">
    <property type="entry name" value="Flavin_mOase"/>
</dbReference>
<dbReference type="InterPro" id="IPR020946">
    <property type="entry name" value="Flavin_mOase-like"/>
</dbReference>
<dbReference type="InterPro" id="IPR002253">
    <property type="entry name" value="Flavin_mOase_1"/>
</dbReference>
<dbReference type="InterPro" id="IPR050346">
    <property type="entry name" value="FMO-like"/>
</dbReference>
<dbReference type="PANTHER" id="PTHR23023">
    <property type="entry name" value="DIMETHYLANILINE MONOOXYGENASE"/>
    <property type="match status" value="1"/>
</dbReference>
<dbReference type="Pfam" id="PF00743">
    <property type="entry name" value="FMO-like"/>
    <property type="match status" value="1"/>
</dbReference>
<dbReference type="PIRSF" id="PIRSF000332">
    <property type="entry name" value="FMO"/>
    <property type="match status" value="1"/>
</dbReference>
<dbReference type="PRINTS" id="PR00370">
    <property type="entry name" value="FMOXYGENASE"/>
</dbReference>
<dbReference type="PRINTS" id="PR01121">
    <property type="entry name" value="FMOXYGENASE1"/>
</dbReference>
<dbReference type="SUPFAM" id="SSF51905">
    <property type="entry name" value="FAD/NAD(P)-binding domain"/>
    <property type="match status" value="3"/>
</dbReference>
<keyword id="KW-0007">Acetylation</keyword>
<keyword id="KW-0903">Direct protein sequencing</keyword>
<keyword id="KW-0256">Endoplasmic reticulum</keyword>
<keyword id="KW-0274">FAD</keyword>
<keyword id="KW-0285">Flavoprotein</keyword>
<keyword id="KW-0325">Glycoprotein</keyword>
<keyword id="KW-0472">Membrane</keyword>
<keyword id="KW-0503">Monooxygenase</keyword>
<keyword id="KW-0521">NADP</keyword>
<keyword id="KW-0560">Oxidoreductase</keyword>
<keyword id="KW-1185">Reference proteome</keyword>
<keyword id="KW-0812">Transmembrane</keyword>
<keyword id="KW-1133">Transmembrane helix</keyword>
<organism>
    <name type="scientific">Sus scrofa</name>
    <name type="common">Pig</name>
    <dbReference type="NCBI Taxonomy" id="9823"/>
    <lineage>
        <taxon>Eukaryota</taxon>
        <taxon>Metazoa</taxon>
        <taxon>Chordata</taxon>
        <taxon>Craniata</taxon>
        <taxon>Vertebrata</taxon>
        <taxon>Euteleostomi</taxon>
        <taxon>Mammalia</taxon>
        <taxon>Eutheria</taxon>
        <taxon>Laurasiatheria</taxon>
        <taxon>Artiodactyla</taxon>
        <taxon>Suina</taxon>
        <taxon>Suidae</taxon>
        <taxon>Sus</taxon>
    </lineage>
</organism>
<evidence type="ECO:0000250" key="1">
    <source>
        <dbReference type="UniProtKB" id="P36365"/>
    </source>
</evidence>
<evidence type="ECO:0000250" key="2">
    <source>
        <dbReference type="UniProtKB" id="Q01740"/>
    </source>
</evidence>
<evidence type="ECO:0000250" key="3">
    <source>
        <dbReference type="UniProtKB" id="Q9HFE4"/>
    </source>
</evidence>
<evidence type="ECO:0000255" key="4"/>
<evidence type="ECO:0000269" key="5">
    <source>
    </source>
</evidence>
<evidence type="ECO:0000269" key="6">
    <source>
    </source>
</evidence>
<evidence type="ECO:0000269" key="7">
    <source>
    </source>
</evidence>
<evidence type="ECO:0000269" key="8">
    <source>
    </source>
</evidence>
<evidence type="ECO:0000305" key="9"/>
<evidence type="ECO:0000305" key="10">
    <source>
    </source>
</evidence>
<evidence type="ECO:0000305" key="11">
    <source>
    </source>
</evidence>
<accession>P16549</accession>
<protein>
    <recommendedName>
        <fullName evidence="10">Flavin-containing monooxygenase 1</fullName>
        <ecNumber evidence="1">1.14.13.148</ecNumber>
        <ecNumber evidence="7">1.14.13.8</ecNumber>
    </recommendedName>
    <alternativeName>
        <fullName>Dimethylaniline monooxygenase [N-oxide-forming] 1</fullName>
    </alternativeName>
    <alternativeName>
        <fullName>Dimethylaniline oxidase 1</fullName>
    </alternativeName>
    <alternativeName>
        <fullName>Hepatic flavin-containing monooxygenase 1</fullName>
        <shortName>FMO 1</shortName>
    </alternativeName>
    <alternativeName>
        <fullName evidence="9">Trimethylamine monooxygenase</fullName>
    </alternativeName>
</protein>
<reference key="1">
    <citation type="journal article" date="1990" name="Biochemistry">
        <title>The flavin-containing monooxygenase expressed in pig liver: primary sequence, distribution, and evidence for a single gene.</title>
        <authorList>
            <person name="Gasser R."/>
            <person name="Tynes R.E."/>
            <person name="Lawton M.P."/>
            <person name="Korsmeyer K.K."/>
            <person name="Ziegler D.M."/>
            <person name="Philpot R.M."/>
        </authorList>
    </citation>
    <scope>NUCLEOTIDE SEQUENCE [MRNA]</scope>
    <scope>PROTEIN SEQUENCE OF 137-151 AND 309-318</scope>
    <scope>TISSUE SPECIFICITY</scope>
    <source>
        <tissue>Liver</tissue>
    </source>
</reference>
<reference key="2">
    <citation type="journal article" date="1990" name="Biochem. Biophys. Res. Commun.">
        <title>N-terminus determination: FAD and NADP binding domain mapping of hog liver flavin-containing monooxygenase by tandem mass spectrometry.</title>
        <authorList>
            <person name="Guan S.H."/>
            <person name="Falick A.M."/>
            <person name="Cashman J.R."/>
        </authorList>
    </citation>
    <scope>PROTEIN SEQUENCE OF 2-14 AND 185-202</scope>
    <scope>ACETYLATION AT ALA-2</scope>
    <scope>IDENTIFICATION BY MASS SPECTROMETRY</scope>
    <source>
        <tissue>Liver</tissue>
    </source>
</reference>
<reference key="3">
    <citation type="journal article" date="1995" name="Eur. J. Biochem.">
        <title>An essential lysyl residue (Lys208) in the substrate-binding site of porcine FAD-containing monooxygenase.</title>
        <authorList>
            <person name="Wu R.-F."/>
            <person name="Ichikawa Y."/>
        </authorList>
    </citation>
    <scope>PROTEIN SEQUENCE OF 186-208</scope>
    <scope>FUNCTION</scope>
    <scope>CATALYTIC ACTIVITY</scope>
    <scope>SUBCELLULAR LOCATION</scope>
    <scope>SITE</scope>
    <source>
        <tissue>Liver</tissue>
    </source>
</reference>
<reference key="4">
    <citation type="journal article" date="1998" name="Chem. Res. Toxicol.">
        <title>N-glycosylation of pig flavin-containing monooxygenase form 1: determination of the site of protein modification by mass spectrometry.</title>
        <authorList>
            <person name="Korsmeyer K.K."/>
            <person name="Guan S."/>
            <person name="Yang Z.C."/>
            <person name="Falick A.M."/>
            <person name="Ziegler D.M."/>
            <person name="Cashman J.R."/>
        </authorList>
    </citation>
    <scope>GLYCOSYLATION AT ASN-120</scope>
    <scope>TOPOLOGY</scope>
</reference>
<sequence length="532" mass="59952">MAKRVAIVGAGVSGLASIKCCLEEGLEPTCFERSDDLGGLWRFTEHVEEGRASLYKSVVSNSCKEMSCYPDFPFPEDYPNYVPNSHFLEYLRMYANQFNLLKCIQFKTKVCSVTKHEDFNTTGQWDVVTLCEGKQESAVFDAVMVCTGFLTNPYLPLDSFPGINTFKGQYFHSRQYKHPDIFKDKSVLVVGMGNSGTDIAVEASHLAKKVFLSTTGGAWVISRVFDSGYPWDMVFMTRFQNMFRNSLPTPIVNWLIAKKMNSWFNHANYGLIPEDRIQLREPVLNDELPGRIITGKVLIKPSIKEVKENSVVFNSSPEEEPIDIIVFATGYTFAFPFLDESVVKVEDGQASLYKYIFPAHLQKPTLAVIGLIKPLGSLLPTGDTQARWAVRVLKGVNKLPPSSVMIQEVNTRKENKPSGFGLCYCKALQSDYIAYIDELLTYIDAKPNMFSLLLTDPHLALTIFFGPCTPYQFRLTGPGKWEGARNAIMTQWDRTFKVTKTRIVKESPSPFASLLKLFSFLALLVAIFQIFL</sequence>
<proteinExistence type="evidence at protein level"/>
<comment type="function">
    <text evidence="1 2 7">Broad spectrum monooxygenase that catalyzes the oxygenation of a wide variety of nitrogen- and sulfur-containing compounds including xenobiotics (PubMed:7758472). Catalyzes the S-oxygenation of hypotaurine to produce taurine, an organic osmolyte involved in cell volume regulation as well as a variety of cytoprotective and developmental processes (By similarity). In vitro, catalyzes the N-oxygenation of trimethylamine (TMA) to produce trimethylamine N-oxide (TMAO) and could therefore participate to the detoxification of this compound that is generated by the action of gut microbiota from dietary precursors such as choline, choline containing compounds, betaine or L-carnitine (By similarity).</text>
</comment>
<comment type="catalytic activity">
    <reaction evidence="2">
        <text>hypotaurine + NADPH + O2 + H(+) = taurine + NADP(+) + H2O</text>
        <dbReference type="Rhea" id="RHEA:69819"/>
        <dbReference type="ChEBI" id="CHEBI:15377"/>
        <dbReference type="ChEBI" id="CHEBI:15378"/>
        <dbReference type="ChEBI" id="CHEBI:15379"/>
        <dbReference type="ChEBI" id="CHEBI:57783"/>
        <dbReference type="ChEBI" id="CHEBI:57853"/>
        <dbReference type="ChEBI" id="CHEBI:58349"/>
        <dbReference type="ChEBI" id="CHEBI:507393"/>
        <dbReference type="EC" id="1.14.13.8"/>
    </reaction>
    <physiologicalReaction direction="left-to-right" evidence="2">
        <dbReference type="Rhea" id="RHEA:69820"/>
    </physiologicalReaction>
</comment>
<comment type="catalytic activity">
    <reaction evidence="2">
        <text>hypotaurine + NADH + O2 + H(+) = taurine + NAD(+) + H2O</text>
        <dbReference type="Rhea" id="RHEA:74111"/>
        <dbReference type="ChEBI" id="CHEBI:15377"/>
        <dbReference type="ChEBI" id="CHEBI:15378"/>
        <dbReference type="ChEBI" id="CHEBI:15379"/>
        <dbReference type="ChEBI" id="CHEBI:57540"/>
        <dbReference type="ChEBI" id="CHEBI:57853"/>
        <dbReference type="ChEBI" id="CHEBI:57945"/>
        <dbReference type="ChEBI" id="CHEBI:507393"/>
        <dbReference type="EC" id="1.14.13.8"/>
    </reaction>
    <physiologicalReaction direction="left-to-right" evidence="2">
        <dbReference type="Rhea" id="RHEA:74112"/>
    </physiologicalReaction>
</comment>
<comment type="catalytic activity">
    <reaction evidence="1">
        <text>trimethylamine + NADPH + O2 = trimethylamine N-oxide + NADP(+) + H2O</text>
        <dbReference type="Rhea" id="RHEA:31979"/>
        <dbReference type="ChEBI" id="CHEBI:15377"/>
        <dbReference type="ChEBI" id="CHEBI:15379"/>
        <dbReference type="ChEBI" id="CHEBI:15724"/>
        <dbReference type="ChEBI" id="CHEBI:57783"/>
        <dbReference type="ChEBI" id="CHEBI:58349"/>
        <dbReference type="ChEBI" id="CHEBI:58389"/>
        <dbReference type="EC" id="1.14.13.148"/>
    </reaction>
    <physiologicalReaction direction="left-to-right" evidence="1">
        <dbReference type="Rhea" id="RHEA:31980"/>
    </physiologicalReaction>
</comment>
<comment type="catalytic activity">
    <reaction evidence="7">
        <text>N,N-dimethylaniline + NADPH + O2 + H(+) = N,N-dimethylaniline N-oxide + NADP(+) + H2O</text>
        <dbReference type="Rhea" id="RHEA:24468"/>
        <dbReference type="ChEBI" id="CHEBI:15377"/>
        <dbReference type="ChEBI" id="CHEBI:15378"/>
        <dbReference type="ChEBI" id="CHEBI:15379"/>
        <dbReference type="ChEBI" id="CHEBI:16269"/>
        <dbReference type="ChEBI" id="CHEBI:17735"/>
        <dbReference type="ChEBI" id="CHEBI:57783"/>
        <dbReference type="ChEBI" id="CHEBI:58349"/>
        <dbReference type="EC" id="1.14.13.8"/>
    </reaction>
    <physiologicalReaction direction="left-to-right" evidence="10">
        <dbReference type="Rhea" id="RHEA:24469"/>
    </physiologicalReaction>
</comment>
<comment type="cofactor">
    <cofactor evidence="2">
        <name>FAD</name>
        <dbReference type="ChEBI" id="CHEBI:57692"/>
    </cofactor>
</comment>
<comment type="subcellular location">
    <subcellularLocation>
        <location evidence="7">Endoplasmic reticulum membrane</location>
        <topology evidence="4">Single-pass membrane protein</topology>
    </subcellularLocation>
</comment>
<comment type="tissue specificity">
    <text evidence="5">Liver.</text>
</comment>
<comment type="similarity">
    <text evidence="9">Belongs to the FMO family.</text>
</comment>
<feature type="initiator methionine" description="Removed" evidence="6">
    <location>
        <position position="1"/>
    </location>
</feature>
<feature type="chain" id="PRO_0000147641" description="Flavin-containing monooxygenase 1">
    <location>
        <begin position="2"/>
        <end position="532"/>
    </location>
</feature>
<feature type="topological domain" description="Lumenal" evidence="11">
    <location>
        <begin position="2"/>
        <end position="510"/>
    </location>
</feature>
<feature type="transmembrane region" description="Helical" evidence="4">
    <location>
        <begin position="511"/>
        <end position="531"/>
    </location>
</feature>
<feature type="topological domain" description="Cytoplasmic" evidence="11">
    <location>
        <position position="532"/>
    </location>
</feature>
<feature type="binding site" evidence="3">
    <location>
        <begin position="9"/>
        <end position="13"/>
    </location>
    <ligand>
        <name>FAD</name>
        <dbReference type="ChEBI" id="CHEBI:57692"/>
    </ligand>
</feature>
<feature type="binding site" evidence="3">
    <location>
        <position position="32"/>
    </location>
    <ligand>
        <name>FAD</name>
        <dbReference type="ChEBI" id="CHEBI:57692"/>
    </ligand>
</feature>
<feature type="binding site" evidence="3">
    <location>
        <begin position="40"/>
        <end position="41"/>
    </location>
    <ligand>
        <name>FAD</name>
        <dbReference type="ChEBI" id="CHEBI:57692"/>
    </ligand>
</feature>
<feature type="binding site" evidence="3">
    <location>
        <begin position="60"/>
        <end position="61"/>
    </location>
    <ligand>
        <name>NADP(+)</name>
        <dbReference type="ChEBI" id="CHEBI:58349"/>
    </ligand>
</feature>
<feature type="binding site" evidence="3">
    <location>
        <begin position="61"/>
        <end position="62"/>
    </location>
    <ligand>
        <name>FAD</name>
        <dbReference type="ChEBI" id="CHEBI:57692"/>
    </ligand>
</feature>
<feature type="binding site" evidence="3">
    <location>
        <begin position="195"/>
        <end position="198"/>
    </location>
    <ligand>
        <name>NADP(+)</name>
        <dbReference type="ChEBI" id="CHEBI:58349"/>
    </ligand>
</feature>
<feature type="site" description="Important for substrate binding" evidence="7">
    <location>
        <position position="208"/>
    </location>
</feature>
<feature type="modified residue" description="N-acetylalanine" evidence="6">
    <location>
        <position position="2"/>
    </location>
</feature>
<feature type="glycosylation site" description="N-linked (GlcNAc...) (high mannose) asparagine" evidence="8">
    <location>
        <position position="120"/>
    </location>
</feature>
<name>FMO1_PIG</name>